<gene>
    <name evidence="1" type="primary">hemC</name>
    <name type="ordered locus">YPTS_0196</name>
</gene>
<feature type="chain" id="PRO_1000114188" description="Porphobilinogen deaminase">
    <location>
        <begin position="1"/>
        <end position="313"/>
    </location>
</feature>
<feature type="modified residue" description="S-(dipyrrolylmethanemethyl)cysteine" evidence="1">
    <location>
        <position position="242"/>
    </location>
</feature>
<reference key="1">
    <citation type="submission" date="2008-04" db="EMBL/GenBank/DDBJ databases">
        <title>Complete sequence of Yersinia pseudotuberculosis PB1/+.</title>
        <authorList>
            <person name="Copeland A."/>
            <person name="Lucas S."/>
            <person name="Lapidus A."/>
            <person name="Glavina del Rio T."/>
            <person name="Dalin E."/>
            <person name="Tice H."/>
            <person name="Bruce D."/>
            <person name="Goodwin L."/>
            <person name="Pitluck S."/>
            <person name="Munk A.C."/>
            <person name="Brettin T."/>
            <person name="Detter J.C."/>
            <person name="Han C."/>
            <person name="Tapia R."/>
            <person name="Schmutz J."/>
            <person name="Larimer F."/>
            <person name="Land M."/>
            <person name="Hauser L."/>
            <person name="Challacombe J.F."/>
            <person name="Green L."/>
            <person name="Lindler L.E."/>
            <person name="Nikolich M.P."/>
            <person name="Richardson P."/>
        </authorList>
    </citation>
    <scope>NUCLEOTIDE SEQUENCE [LARGE SCALE GENOMIC DNA]</scope>
    <source>
        <strain>PB1/+</strain>
    </source>
</reference>
<proteinExistence type="inferred from homology"/>
<keyword id="KW-0627">Porphyrin biosynthesis</keyword>
<keyword id="KW-0808">Transferase</keyword>
<sequence>MLDKIIRIATRQSPLALWQAHYVQHLLQANHPGLQIELVPMVTRGDIILDTPLAKVGGKGLFVKELELALLDGRADIAVHSMKDVPIAFPEGLGLVAICEREDPRDAFVSSHYAHLDDLPAGSVVGTSSLRRQCQLRERRPDLIIRDLRGNVGTRLAKLDNGDYQAIILAVAGLKRLGLETRIRYAMSAEESLPAVGQGAVGIECRLDDDHTRQLLAPLNHRHTELRVCAERAMNIRLEGGCQVPIGSYAELEGDTLWLRALVGAPDGSQMIRGERRGPAAEAEQMGIELADELLSRGAREILAAVYLDNPAR</sequence>
<accession>B2K065</accession>
<name>HEM3_YERPB</name>
<evidence type="ECO:0000255" key="1">
    <source>
        <dbReference type="HAMAP-Rule" id="MF_00260"/>
    </source>
</evidence>
<dbReference type="EC" id="2.5.1.61" evidence="1"/>
<dbReference type="EMBL" id="CP001048">
    <property type="protein sequence ID" value="ACC87193.1"/>
    <property type="molecule type" value="Genomic_DNA"/>
</dbReference>
<dbReference type="RefSeq" id="WP_011191508.1">
    <property type="nucleotide sequence ID" value="NZ_CP009780.1"/>
</dbReference>
<dbReference type="SMR" id="B2K065"/>
<dbReference type="KEGG" id="ypb:YPTS_0196"/>
<dbReference type="PATRIC" id="fig|502801.10.peg.3873"/>
<dbReference type="UniPathway" id="UPA00251">
    <property type="reaction ID" value="UER00319"/>
</dbReference>
<dbReference type="GO" id="GO:0005737">
    <property type="term" value="C:cytoplasm"/>
    <property type="evidence" value="ECO:0007669"/>
    <property type="project" value="TreeGrafter"/>
</dbReference>
<dbReference type="GO" id="GO:0004418">
    <property type="term" value="F:hydroxymethylbilane synthase activity"/>
    <property type="evidence" value="ECO:0007669"/>
    <property type="project" value="UniProtKB-UniRule"/>
</dbReference>
<dbReference type="GO" id="GO:0006782">
    <property type="term" value="P:protoporphyrinogen IX biosynthetic process"/>
    <property type="evidence" value="ECO:0007669"/>
    <property type="project" value="UniProtKB-UniRule"/>
</dbReference>
<dbReference type="CDD" id="cd13646">
    <property type="entry name" value="PBP2_EcHMBS_like"/>
    <property type="match status" value="1"/>
</dbReference>
<dbReference type="FunFam" id="3.30.160.40:FF:000002">
    <property type="entry name" value="Porphobilinogen deaminase"/>
    <property type="match status" value="1"/>
</dbReference>
<dbReference type="FunFam" id="3.40.190.10:FF:000004">
    <property type="entry name" value="Porphobilinogen deaminase"/>
    <property type="match status" value="1"/>
</dbReference>
<dbReference type="FunFam" id="3.40.190.10:FF:000005">
    <property type="entry name" value="Porphobilinogen deaminase"/>
    <property type="match status" value="1"/>
</dbReference>
<dbReference type="Gene3D" id="3.40.190.10">
    <property type="entry name" value="Periplasmic binding protein-like II"/>
    <property type="match status" value="2"/>
</dbReference>
<dbReference type="Gene3D" id="3.30.160.40">
    <property type="entry name" value="Porphobilinogen deaminase, C-terminal domain"/>
    <property type="match status" value="1"/>
</dbReference>
<dbReference type="HAMAP" id="MF_00260">
    <property type="entry name" value="Porphobil_deam"/>
    <property type="match status" value="1"/>
</dbReference>
<dbReference type="InterPro" id="IPR000860">
    <property type="entry name" value="HemC"/>
</dbReference>
<dbReference type="InterPro" id="IPR022419">
    <property type="entry name" value="Porphobilin_deaminase_cofac_BS"/>
</dbReference>
<dbReference type="InterPro" id="IPR022417">
    <property type="entry name" value="Porphobilin_deaminase_N"/>
</dbReference>
<dbReference type="InterPro" id="IPR022418">
    <property type="entry name" value="Porphobilinogen_deaminase_C"/>
</dbReference>
<dbReference type="InterPro" id="IPR036803">
    <property type="entry name" value="Porphobilinogen_deaminase_C_sf"/>
</dbReference>
<dbReference type="NCBIfam" id="TIGR00212">
    <property type="entry name" value="hemC"/>
    <property type="match status" value="1"/>
</dbReference>
<dbReference type="PANTHER" id="PTHR11557">
    <property type="entry name" value="PORPHOBILINOGEN DEAMINASE"/>
    <property type="match status" value="1"/>
</dbReference>
<dbReference type="PANTHER" id="PTHR11557:SF0">
    <property type="entry name" value="PORPHOBILINOGEN DEAMINASE"/>
    <property type="match status" value="1"/>
</dbReference>
<dbReference type="Pfam" id="PF01379">
    <property type="entry name" value="Porphobil_deam"/>
    <property type="match status" value="1"/>
</dbReference>
<dbReference type="Pfam" id="PF03900">
    <property type="entry name" value="Porphobil_deamC"/>
    <property type="match status" value="1"/>
</dbReference>
<dbReference type="PIRSF" id="PIRSF001438">
    <property type="entry name" value="4pyrrol_synth_OHMeBilane_synth"/>
    <property type="match status" value="1"/>
</dbReference>
<dbReference type="PRINTS" id="PR00151">
    <property type="entry name" value="PORPHBDMNASE"/>
</dbReference>
<dbReference type="SUPFAM" id="SSF53850">
    <property type="entry name" value="Periplasmic binding protein-like II"/>
    <property type="match status" value="1"/>
</dbReference>
<dbReference type="SUPFAM" id="SSF54782">
    <property type="entry name" value="Porphobilinogen deaminase (hydroxymethylbilane synthase), C-terminal domain"/>
    <property type="match status" value="1"/>
</dbReference>
<dbReference type="PROSITE" id="PS00533">
    <property type="entry name" value="PORPHOBILINOGEN_DEAM"/>
    <property type="match status" value="1"/>
</dbReference>
<organism>
    <name type="scientific">Yersinia pseudotuberculosis serotype IB (strain PB1/+)</name>
    <dbReference type="NCBI Taxonomy" id="502801"/>
    <lineage>
        <taxon>Bacteria</taxon>
        <taxon>Pseudomonadati</taxon>
        <taxon>Pseudomonadota</taxon>
        <taxon>Gammaproteobacteria</taxon>
        <taxon>Enterobacterales</taxon>
        <taxon>Yersiniaceae</taxon>
        <taxon>Yersinia</taxon>
    </lineage>
</organism>
<comment type="function">
    <text evidence="1">Tetrapolymerization of the monopyrrole PBG into the hydroxymethylbilane pre-uroporphyrinogen in several discrete steps.</text>
</comment>
<comment type="catalytic activity">
    <reaction evidence="1">
        <text>4 porphobilinogen + H2O = hydroxymethylbilane + 4 NH4(+)</text>
        <dbReference type="Rhea" id="RHEA:13185"/>
        <dbReference type="ChEBI" id="CHEBI:15377"/>
        <dbReference type="ChEBI" id="CHEBI:28938"/>
        <dbReference type="ChEBI" id="CHEBI:57845"/>
        <dbReference type="ChEBI" id="CHEBI:58126"/>
        <dbReference type="EC" id="2.5.1.61"/>
    </reaction>
</comment>
<comment type="cofactor">
    <cofactor evidence="1">
        <name>dipyrromethane</name>
        <dbReference type="ChEBI" id="CHEBI:60342"/>
    </cofactor>
    <text evidence="1">Binds 1 dipyrromethane group covalently.</text>
</comment>
<comment type="pathway">
    <text evidence="1">Porphyrin-containing compound metabolism; protoporphyrin-IX biosynthesis; coproporphyrinogen-III from 5-aminolevulinate: step 2/4.</text>
</comment>
<comment type="subunit">
    <text evidence="1">Monomer.</text>
</comment>
<comment type="miscellaneous">
    <text evidence="1">The porphobilinogen subunits are added to the dipyrromethane group.</text>
</comment>
<comment type="similarity">
    <text evidence="1">Belongs to the HMBS family.</text>
</comment>
<protein>
    <recommendedName>
        <fullName evidence="1">Porphobilinogen deaminase</fullName>
        <shortName evidence="1">PBG</shortName>
        <ecNumber evidence="1">2.5.1.61</ecNumber>
    </recommendedName>
    <alternativeName>
        <fullName evidence="1">Hydroxymethylbilane synthase</fullName>
        <shortName evidence="1">HMBS</shortName>
    </alternativeName>
    <alternativeName>
        <fullName evidence="1">Pre-uroporphyrinogen synthase</fullName>
    </alternativeName>
</protein>